<organism>
    <name type="scientific">Streptococcus pneumoniae (strain ATCC 700669 / Spain 23F-1)</name>
    <dbReference type="NCBI Taxonomy" id="561276"/>
    <lineage>
        <taxon>Bacteria</taxon>
        <taxon>Bacillati</taxon>
        <taxon>Bacillota</taxon>
        <taxon>Bacilli</taxon>
        <taxon>Lactobacillales</taxon>
        <taxon>Streptococcaceae</taxon>
        <taxon>Streptococcus</taxon>
    </lineage>
</organism>
<gene>
    <name evidence="1" type="primary">pyrB</name>
    <name type="ordered locus">SPN23F11710</name>
</gene>
<protein>
    <recommendedName>
        <fullName evidence="1">Aspartate carbamoyltransferase catalytic subunit</fullName>
        <ecNumber evidence="1">2.1.3.2</ecNumber>
    </recommendedName>
    <alternativeName>
        <fullName evidence="1">Aspartate transcarbamylase</fullName>
        <shortName evidence="1">ATCase</shortName>
    </alternativeName>
</protein>
<sequence length="307" mass="34690">MSENQQALNHVVSMEDLTVDQVMKLIKRGIEFKNGAQLPYEDHPIVSNLFFEDSTRTHKSFEVAEIKLGLERLDFDVKTSSVNKGETLYDTILTLSALGVDVCVIRHPEVDYYRELIASPTITTSIINGGDGSGQHPSQSLLDLMTIYEEFGHFEGLKVAIAGDLDHSRVAKSNMQILKRLGAELFFAGPEEWRSQEFADYGQFVTIDEIIDQVDVMMFLRVQHERHDSGAVFSKEDYHAQHGLTQERYDRLKETAILMHPAPINRDVEIADHLVEAPKSRIVQQMTNGVFVRMAILESVLASRNAN</sequence>
<keyword id="KW-0665">Pyrimidine biosynthesis</keyword>
<keyword id="KW-0808">Transferase</keyword>
<evidence type="ECO:0000255" key="1">
    <source>
        <dbReference type="HAMAP-Rule" id="MF_00001"/>
    </source>
</evidence>
<proteinExistence type="inferred from homology"/>
<reference key="1">
    <citation type="journal article" date="2009" name="J. Bacteriol.">
        <title>Role of conjugative elements in the evolution of the multidrug-resistant pandemic clone Streptococcus pneumoniae Spain23F ST81.</title>
        <authorList>
            <person name="Croucher N.J."/>
            <person name="Walker D."/>
            <person name="Romero P."/>
            <person name="Lennard N."/>
            <person name="Paterson G.K."/>
            <person name="Bason N.C."/>
            <person name="Mitchell A.M."/>
            <person name="Quail M.A."/>
            <person name="Andrew P.W."/>
            <person name="Parkhill J."/>
            <person name="Bentley S.D."/>
            <person name="Mitchell T.J."/>
        </authorList>
    </citation>
    <scope>NUCLEOTIDE SEQUENCE [LARGE SCALE GENOMIC DNA]</scope>
    <source>
        <strain>ATCC 700669 / Spain 23F-1</strain>
    </source>
</reference>
<accession>B8ZJU1</accession>
<feature type="chain" id="PRO_1000116160" description="Aspartate carbamoyltransferase catalytic subunit">
    <location>
        <begin position="1"/>
        <end position="307"/>
    </location>
</feature>
<feature type="binding site" evidence="1">
    <location>
        <position position="56"/>
    </location>
    <ligand>
        <name>carbamoyl phosphate</name>
        <dbReference type="ChEBI" id="CHEBI:58228"/>
    </ligand>
</feature>
<feature type="binding site" evidence="1">
    <location>
        <position position="57"/>
    </location>
    <ligand>
        <name>carbamoyl phosphate</name>
        <dbReference type="ChEBI" id="CHEBI:58228"/>
    </ligand>
</feature>
<feature type="binding site" evidence="1">
    <location>
        <position position="84"/>
    </location>
    <ligand>
        <name>L-aspartate</name>
        <dbReference type="ChEBI" id="CHEBI:29991"/>
    </ligand>
</feature>
<feature type="binding site" evidence="1">
    <location>
        <position position="106"/>
    </location>
    <ligand>
        <name>carbamoyl phosphate</name>
        <dbReference type="ChEBI" id="CHEBI:58228"/>
    </ligand>
</feature>
<feature type="binding site" evidence="1">
    <location>
        <position position="136"/>
    </location>
    <ligand>
        <name>carbamoyl phosphate</name>
        <dbReference type="ChEBI" id="CHEBI:58228"/>
    </ligand>
</feature>
<feature type="binding site" evidence="1">
    <location>
        <position position="139"/>
    </location>
    <ligand>
        <name>carbamoyl phosphate</name>
        <dbReference type="ChEBI" id="CHEBI:58228"/>
    </ligand>
</feature>
<feature type="binding site" evidence="1">
    <location>
        <position position="169"/>
    </location>
    <ligand>
        <name>L-aspartate</name>
        <dbReference type="ChEBI" id="CHEBI:29991"/>
    </ligand>
</feature>
<feature type="binding site" evidence="1">
    <location>
        <position position="221"/>
    </location>
    <ligand>
        <name>L-aspartate</name>
        <dbReference type="ChEBI" id="CHEBI:29991"/>
    </ligand>
</feature>
<feature type="binding site" evidence="1">
    <location>
        <position position="262"/>
    </location>
    <ligand>
        <name>carbamoyl phosphate</name>
        <dbReference type="ChEBI" id="CHEBI:58228"/>
    </ligand>
</feature>
<feature type="binding site" evidence="1">
    <location>
        <position position="263"/>
    </location>
    <ligand>
        <name>carbamoyl phosphate</name>
        <dbReference type="ChEBI" id="CHEBI:58228"/>
    </ligand>
</feature>
<name>PYRB_STRPJ</name>
<comment type="function">
    <text evidence="1">Catalyzes the condensation of carbamoyl phosphate and aspartate to form carbamoyl aspartate and inorganic phosphate, the committed step in the de novo pyrimidine nucleotide biosynthesis pathway.</text>
</comment>
<comment type="catalytic activity">
    <reaction evidence="1">
        <text>carbamoyl phosphate + L-aspartate = N-carbamoyl-L-aspartate + phosphate + H(+)</text>
        <dbReference type="Rhea" id="RHEA:20013"/>
        <dbReference type="ChEBI" id="CHEBI:15378"/>
        <dbReference type="ChEBI" id="CHEBI:29991"/>
        <dbReference type="ChEBI" id="CHEBI:32814"/>
        <dbReference type="ChEBI" id="CHEBI:43474"/>
        <dbReference type="ChEBI" id="CHEBI:58228"/>
        <dbReference type="EC" id="2.1.3.2"/>
    </reaction>
</comment>
<comment type="pathway">
    <text evidence="1">Pyrimidine metabolism; UMP biosynthesis via de novo pathway; (S)-dihydroorotate from bicarbonate: step 2/3.</text>
</comment>
<comment type="subunit">
    <text evidence="1">Heterododecamer (2C3:3R2) of six catalytic PyrB chains organized as two trimers (C3), and six regulatory PyrI chains organized as three dimers (R2).</text>
</comment>
<comment type="similarity">
    <text evidence="1">Belongs to the aspartate/ornithine carbamoyltransferase superfamily. ATCase family.</text>
</comment>
<dbReference type="EC" id="2.1.3.2" evidence="1"/>
<dbReference type="EMBL" id="FM211187">
    <property type="protein sequence ID" value="CAR68977.1"/>
    <property type="molecule type" value="Genomic_DNA"/>
</dbReference>
<dbReference type="RefSeq" id="WP_001293838.1">
    <property type="nucleotide sequence ID" value="NC_011900.1"/>
</dbReference>
<dbReference type="SMR" id="B8ZJU1"/>
<dbReference type="KEGG" id="sne:SPN23F11710"/>
<dbReference type="HOGENOM" id="CLU_043846_2_1_9"/>
<dbReference type="UniPathway" id="UPA00070">
    <property type="reaction ID" value="UER00116"/>
</dbReference>
<dbReference type="GO" id="GO:0005829">
    <property type="term" value="C:cytosol"/>
    <property type="evidence" value="ECO:0007669"/>
    <property type="project" value="TreeGrafter"/>
</dbReference>
<dbReference type="GO" id="GO:0016597">
    <property type="term" value="F:amino acid binding"/>
    <property type="evidence" value="ECO:0007669"/>
    <property type="project" value="InterPro"/>
</dbReference>
<dbReference type="GO" id="GO:0004070">
    <property type="term" value="F:aspartate carbamoyltransferase activity"/>
    <property type="evidence" value="ECO:0007669"/>
    <property type="project" value="UniProtKB-UniRule"/>
</dbReference>
<dbReference type="GO" id="GO:0006207">
    <property type="term" value="P:'de novo' pyrimidine nucleobase biosynthetic process"/>
    <property type="evidence" value="ECO:0007669"/>
    <property type="project" value="InterPro"/>
</dbReference>
<dbReference type="GO" id="GO:0044205">
    <property type="term" value="P:'de novo' UMP biosynthetic process"/>
    <property type="evidence" value="ECO:0007669"/>
    <property type="project" value="UniProtKB-UniRule"/>
</dbReference>
<dbReference type="GO" id="GO:0006520">
    <property type="term" value="P:amino acid metabolic process"/>
    <property type="evidence" value="ECO:0007669"/>
    <property type="project" value="InterPro"/>
</dbReference>
<dbReference type="FunFam" id="3.40.50.1370:FF:000011">
    <property type="entry name" value="Aspartate carbamoyltransferase"/>
    <property type="match status" value="1"/>
</dbReference>
<dbReference type="Gene3D" id="3.40.50.1370">
    <property type="entry name" value="Aspartate/ornithine carbamoyltransferase"/>
    <property type="match status" value="2"/>
</dbReference>
<dbReference type="HAMAP" id="MF_00001">
    <property type="entry name" value="Asp_carb_tr"/>
    <property type="match status" value="1"/>
</dbReference>
<dbReference type="InterPro" id="IPR006132">
    <property type="entry name" value="Asp/Orn_carbamoyltranf_P-bd"/>
</dbReference>
<dbReference type="InterPro" id="IPR006130">
    <property type="entry name" value="Asp/Orn_carbamoylTrfase"/>
</dbReference>
<dbReference type="InterPro" id="IPR036901">
    <property type="entry name" value="Asp/Orn_carbamoylTrfase_sf"/>
</dbReference>
<dbReference type="InterPro" id="IPR002082">
    <property type="entry name" value="Asp_carbamoyltransf"/>
</dbReference>
<dbReference type="InterPro" id="IPR006131">
    <property type="entry name" value="Asp_carbamoyltransf_Asp/Orn-bd"/>
</dbReference>
<dbReference type="NCBIfam" id="TIGR00670">
    <property type="entry name" value="asp_carb_tr"/>
    <property type="match status" value="1"/>
</dbReference>
<dbReference type="NCBIfam" id="NF002032">
    <property type="entry name" value="PRK00856.1"/>
    <property type="match status" value="1"/>
</dbReference>
<dbReference type="PANTHER" id="PTHR45753:SF6">
    <property type="entry name" value="ASPARTATE CARBAMOYLTRANSFERASE"/>
    <property type="match status" value="1"/>
</dbReference>
<dbReference type="PANTHER" id="PTHR45753">
    <property type="entry name" value="ORNITHINE CARBAMOYLTRANSFERASE, MITOCHONDRIAL"/>
    <property type="match status" value="1"/>
</dbReference>
<dbReference type="Pfam" id="PF00185">
    <property type="entry name" value="OTCace"/>
    <property type="match status" value="1"/>
</dbReference>
<dbReference type="Pfam" id="PF02729">
    <property type="entry name" value="OTCace_N"/>
    <property type="match status" value="1"/>
</dbReference>
<dbReference type="PRINTS" id="PR00100">
    <property type="entry name" value="AOTCASE"/>
</dbReference>
<dbReference type="PRINTS" id="PR00101">
    <property type="entry name" value="ATCASE"/>
</dbReference>
<dbReference type="SUPFAM" id="SSF53671">
    <property type="entry name" value="Aspartate/ornithine carbamoyltransferase"/>
    <property type="match status" value="1"/>
</dbReference>
<dbReference type="PROSITE" id="PS00097">
    <property type="entry name" value="CARBAMOYLTRANSFERASE"/>
    <property type="match status" value="1"/>
</dbReference>